<proteinExistence type="inferred from homology"/>
<dbReference type="EMBL" id="AE017261">
    <property type="protein sequence ID" value="AAT43805.1"/>
    <property type="molecule type" value="Genomic_DNA"/>
</dbReference>
<dbReference type="RefSeq" id="WP_011178021.1">
    <property type="nucleotide sequence ID" value="NC_005877.1"/>
</dbReference>
<dbReference type="SMR" id="Q6KZP7"/>
<dbReference type="FunCoup" id="Q6KZP7">
    <property type="interactions" value="167"/>
</dbReference>
<dbReference type="STRING" id="263820.PTO1220"/>
<dbReference type="PaxDb" id="263820-PTO1220"/>
<dbReference type="GeneID" id="2844167"/>
<dbReference type="KEGG" id="pto:PTO1220"/>
<dbReference type="PATRIC" id="fig|263820.9.peg.1268"/>
<dbReference type="eggNOG" id="arCOG04239">
    <property type="taxonomic scope" value="Archaea"/>
</dbReference>
<dbReference type="HOGENOM" id="CLU_089738_1_1_2"/>
<dbReference type="InParanoid" id="Q6KZP7"/>
<dbReference type="OrthoDB" id="10429at2157"/>
<dbReference type="Proteomes" id="UP000000438">
    <property type="component" value="Chromosome"/>
</dbReference>
<dbReference type="GO" id="GO:0015935">
    <property type="term" value="C:small ribosomal subunit"/>
    <property type="evidence" value="ECO:0007669"/>
    <property type="project" value="InterPro"/>
</dbReference>
<dbReference type="GO" id="GO:0019843">
    <property type="term" value="F:rRNA binding"/>
    <property type="evidence" value="ECO:0007669"/>
    <property type="project" value="UniProtKB-UniRule"/>
</dbReference>
<dbReference type="GO" id="GO:0003735">
    <property type="term" value="F:structural constituent of ribosome"/>
    <property type="evidence" value="ECO:0007669"/>
    <property type="project" value="InterPro"/>
</dbReference>
<dbReference type="GO" id="GO:0042274">
    <property type="term" value="P:ribosomal small subunit biogenesis"/>
    <property type="evidence" value="ECO:0007669"/>
    <property type="project" value="TreeGrafter"/>
</dbReference>
<dbReference type="GO" id="GO:0006412">
    <property type="term" value="P:translation"/>
    <property type="evidence" value="ECO:0007669"/>
    <property type="project" value="UniProtKB-UniRule"/>
</dbReference>
<dbReference type="CDD" id="cd00165">
    <property type="entry name" value="S4"/>
    <property type="match status" value="1"/>
</dbReference>
<dbReference type="Gene3D" id="3.10.290.10">
    <property type="entry name" value="RNA-binding S4 domain"/>
    <property type="match status" value="1"/>
</dbReference>
<dbReference type="HAMAP" id="MF_01306_A">
    <property type="entry name" value="Ribosomal_uS4_A"/>
    <property type="match status" value="1"/>
</dbReference>
<dbReference type="InterPro" id="IPR022801">
    <property type="entry name" value="Ribosomal_uS4"/>
</dbReference>
<dbReference type="InterPro" id="IPR022802">
    <property type="entry name" value="Ribosomal_uS4_arc"/>
</dbReference>
<dbReference type="InterPro" id="IPR018079">
    <property type="entry name" value="Ribosomal_uS4_CS"/>
</dbReference>
<dbReference type="InterPro" id="IPR005710">
    <property type="entry name" value="Ribosomal_uS4_euk/arc"/>
</dbReference>
<dbReference type="InterPro" id="IPR001912">
    <property type="entry name" value="Ribosomal_uS4_N"/>
</dbReference>
<dbReference type="InterPro" id="IPR002942">
    <property type="entry name" value="S4_RNA-bd"/>
</dbReference>
<dbReference type="InterPro" id="IPR036986">
    <property type="entry name" value="S4_RNA-bd_sf"/>
</dbReference>
<dbReference type="NCBIfam" id="NF003139">
    <property type="entry name" value="PRK04051.1"/>
    <property type="match status" value="1"/>
</dbReference>
<dbReference type="NCBIfam" id="TIGR01018">
    <property type="entry name" value="uS4_arch"/>
    <property type="match status" value="1"/>
</dbReference>
<dbReference type="PANTHER" id="PTHR11831">
    <property type="entry name" value="30S 40S RIBOSOMAL PROTEIN"/>
    <property type="match status" value="1"/>
</dbReference>
<dbReference type="PANTHER" id="PTHR11831:SF5">
    <property type="entry name" value="40S RIBOSOMAL PROTEIN S9"/>
    <property type="match status" value="1"/>
</dbReference>
<dbReference type="Pfam" id="PF00163">
    <property type="entry name" value="Ribosomal_S4"/>
    <property type="match status" value="1"/>
</dbReference>
<dbReference type="Pfam" id="PF01479">
    <property type="entry name" value="S4"/>
    <property type="match status" value="1"/>
</dbReference>
<dbReference type="SMART" id="SM01390">
    <property type="entry name" value="Ribosomal_S4"/>
    <property type="match status" value="1"/>
</dbReference>
<dbReference type="SMART" id="SM00363">
    <property type="entry name" value="S4"/>
    <property type="match status" value="1"/>
</dbReference>
<dbReference type="SUPFAM" id="SSF55174">
    <property type="entry name" value="Alpha-L RNA-binding motif"/>
    <property type="match status" value="1"/>
</dbReference>
<dbReference type="PROSITE" id="PS00632">
    <property type="entry name" value="RIBOSOMAL_S4"/>
    <property type="match status" value="1"/>
</dbReference>
<dbReference type="PROSITE" id="PS50889">
    <property type="entry name" value="S4"/>
    <property type="match status" value="1"/>
</dbReference>
<reference key="1">
    <citation type="journal article" date="2004" name="Proc. Natl. Acad. Sci. U.S.A.">
        <title>Genome sequence of Picrophilus torridus and its implications for life around pH 0.</title>
        <authorList>
            <person name="Fuetterer O."/>
            <person name="Angelov A."/>
            <person name="Liesegang H."/>
            <person name="Gottschalk G."/>
            <person name="Schleper C."/>
            <person name="Schepers B."/>
            <person name="Dock C."/>
            <person name="Antranikian G."/>
            <person name="Liebl W."/>
        </authorList>
    </citation>
    <scope>NUCLEOTIDE SEQUENCE [LARGE SCALE GENOMIC DNA]</scope>
    <source>
        <strain>ATCC 700027 / DSM 9790 / JCM 10055 / NBRC 100828 / KAW 2/3</strain>
    </source>
</reference>
<feature type="chain" id="PRO_0000132514" description="Small ribosomal subunit protein uS4">
    <location>
        <begin position="1"/>
        <end position="183"/>
    </location>
</feature>
<feature type="domain" description="S4 RNA-binding" evidence="1">
    <location>
        <begin position="106"/>
        <end position="168"/>
    </location>
</feature>
<feature type="region of interest" description="Disordered" evidence="2">
    <location>
        <begin position="158"/>
        <end position="183"/>
    </location>
</feature>
<feature type="compositionally biased region" description="Basic and acidic residues" evidence="2">
    <location>
        <begin position="165"/>
        <end position="183"/>
    </location>
</feature>
<keyword id="KW-0687">Ribonucleoprotein</keyword>
<keyword id="KW-0689">Ribosomal protein</keyword>
<keyword id="KW-0694">RNA-binding</keyword>
<keyword id="KW-0699">rRNA-binding</keyword>
<sequence length="183" mass="21620">MGDQKFQRKKYSTPRHPWEKDRIDAERQLLIKYGLKNKRELWRAQTILTNFRTQARTLQAKLRYNDPLAIKQFQLLIGKLSRLNLLGENATLDDVLSLNIEDILERRLETLVYKKNLALTMKQARQFITHGHIKVNDRVVTIPSFMVEKSMEDSITYNETSPFTDENHPLRMEMSGTKEEENE</sequence>
<organism>
    <name type="scientific">Picrophilus torridus (strain ATCC 700027 / DSM 9790 / JCM 10055 / NBRC 100828 / KAW 2/3)</name>
    <dbReference type="NCBI Taxonomy" id="1122961"/>
    <lineage>
        <taxon>Archaea</taxon>
        <taxon>Methanobacteriati</taxon>
        <taxon>Thermoplasmatota</taxon>
        <taxon>Thermoplasmata</taxon>
        <taxon>Thermoplasmatales</taxon>
        <taxon>Picrophilaceae</taxon>
        <taxon>Picrophilus</taxon>
    </lineage>
</organism>
<comment type="function">
    <text evidence="1">One of the primary rRNA binding proteins, it binds directly to 16S rRNA where it nucleates assembly of the body of the 30S subunit.</text>
</comment>
<comment type="function">
    <text evidence="1">With S5 and S12 plays an important role in translational accuracy.</text>
</comment>
<comment type="subunit">
    <text evidence="1">Part of the 30S ribosomal subunit. Contacts protein S5. The interaction surface between S4 and S5 is involved in control of translational fidelity.</text>
</comment>
<comment type="similarity">
    <text evidence="1">Belongs to the universal ribosomal protein uS4 family.</text>
</comment>
<protein>
    <recommendedName>
        <fullName evidence="1">Small ribosomal subunit protein uS4</fullName>
    </recommendedName>
    <alternativeName>
        <fullName evidence="3">30S ribosomal protein S4</fullName>
    </alternativeName>
</protein>
<evidence type="ECO:0000255" key="1">
    <source>
        <dbReference type="HAMAP-Rule" id="MF_01306"/>
    </source>
</evidence>
<evidence type="ECO:0000256" key="2">
    <source>
        <dbReference type="SAM" id="MobiDB-lite"/>
    </source>
</evidence>
<evidence type="ECO:0000305" key="3"/>
<accession>Q6KZP7</accession>
<name>RS4_PICTO</name>
<gene>
    <name evidence="1" type="primary">rps4</name>
    <name type="ordered locus">PTO1220</name>
</gene>